<proteinExistence type="evidence at transcript level"/>
<accession>Q91838</accession>
<evidence type="ECO:0000250" key="1"/>
<evidence type="ECO:0000255" key="2"/>
<evidence type="ECO:0000255" key="3">
    <source>
        <dbReference type="PROSITE-ProRule" id="PRU00043"/>
    </source>
</evidence>
<evidence type="ECO:0000269" key="4">
    <source>
    </source>
</evidence>
<evidence type="ECO:0000269" key="5">
    <source>
    </source>
</evidence>
<dbReference type="EMBL" id="X85330">
    <property type="protein sequence ID" value="CAA59679.1"/>
    <property type="molecule type" value="mRNA"/>
</dbReference>
<dbReference type="PIR" id="I51638">
    <property type="entry name" value="I51638"/>
</dbReference>
<dbReference type="RefSeq" id="NP_001131054.1">
    <property type="nucleotide sequence ID" value="NM_001137582.1"/>
</dbReference>
<dbReference type="SMR" id="Q91838"/>
<dbReference type="GlyCosmos" id="Q91838">
    <property type="glycosylation" value="5 sites, No reported glycans"/>
</dbReference>
<dbReference type="GeneID" id="100192361"/>
<dbReference type="KEGG" id="xla:100192361"/>
<dbReference type="AGR" id="Xenbase:XB-GENE-1011623"/>
<dbReference type="CTD" id="100192361"/>
<dbReference type="Xenbase" id="XB-GENE-1011623">
    <property type="gene designation" value="cdh20.L"/>
</dbReference>
<dbReference type="OrthoDB" id="6252479at2759"/>
<dbReference type="Proteomes" id="UP000186698">
    <property type="component" value="Chromosome 6L"/>
</dbReference>
<dbReference type="Bgee" id="100192361">
    <property type="expression patterns" value="Expressed in brain and 3 other cell types or tissues"/>
</dbReference>
<dbReference type="GO" id="GO:0005912">
    <property type="term" value="C:adherens junction"/>
    <property type="evidence" value="ECO:0000318"/>
    <property type="project" value="GO_Central"/>
</dbReference>
<dbReference type="GO" id="GO:0016342">
    <property type="term" value="C:catenin complex"/>
    <property type="evidence" value="ECO:0000318"/>
    <property type="project" value="GO_Central"/>
</dbReference>
<dbReference type="GO" id="GO:0008013">
    <property type="term" value="F:beta-catenin binding"/>
    <property type="evidence" value="ECO:0000318"/>
    <property type="project" value="GO_Central"/>
</dbReference>
<dbReference type="GO" id="GO:0045296">
    <property type="term" value="F:cadherin binding"/>
    <property type="evidence" value="ECO:0000318"/>
    <property type="project" value="GO_Central"/>
</dbReference>
<dbReference type="GO" id="GO:0005509">
    <property type="term" value="F:calcium ion binding"/>
    <property type="evidence" value="ECO:0007669"/>
    <property type="project" value="InterPro"/>
</dbReference>
<dbReference type="GO" id="GO:0034332">
    <property type="term" value="P:adherens junction organization"/>
    <property type="evidence" value="ECO:0000318"/>
    <property type="project" value="GO_Central"/>
</dbReference>
<dbReference type="GO" id="GO:0016339">
    <property type="term" value="P:calcium-dependent cell-cell adhesion via plasma membrane cell adhesion molecules"/>
    <property type="evidence" value="ECO:0000318"/>
    <property type="project" value="GO_Central"/>
</dbReference>
<dbReference type="GO" id="GO:0016477">
    <property type="term" value="P:cell migration"/>
    <property type="evidence" value="ECO:0000318"/>
    <property type="project" value="GO_Central"/>
</dbReference>
<dbReference type="GO" id="GO:0000902">
    <property type="term" value="P:cell morphogenesis"/>
    <property type="evidence" value="ECO:0000318"/>
    <property type="project" value="GO_Central"/>
</dbReference>
<dbReference type="GO" id="GO:0044331">
    <property type="term" value="P:cell-cell adhesion mediated by cadherin"/>
    <property type="evidence" value="ECO:0000318"/>
    <property type="project" value="GO_Central"/>
</dbReference>
<dbReference type="GO" id="GO:0007043">
    <property type="term" value="P:cell-cell junction assembly"/>
    <property type="evidence" value="ECO:0000318"/>
    <property type="project" value="GO_Central"/>
</dbReference>
<dbReference type="GO" id="GO:0007156">
    <property type="term" value="P:homophilic cell adhesion via plasma membrane adhesion molecules"/>
    <property type="evidence" value="ECO:0007669"/>
    <property type="project" value="InterPro"/>
</dbReference>
<dbReference type="CDD" id="cd11304">
    <property type="entry name" value="Cadherin_repeat"/>
    <property type="match status" value="4"/>
</dbReference>
<dbReference type="FunFam" id="4.10.900.10:FF:000001">
    <property type="entry name" value="Cadherin 2"/>
    <property type="match status" value="1"/>
</dbReference>
<dbReference type="FunFam" id="2.60.40.60:FF:000008">
    <property type="entry name" value="Cadherin 24"/>
    <property type="match status" value="1"/>
</dbReference>
<dbReference type="FunFam" id="2.60.40.60:FF:000009">
    <property type="entry name" value="Cadherin 24"/>
    <property type="match status" value="1"/>
</dbReference>
<dbReference type="FunFam" id="2.60.40.60:FF:000012">
    <property type="entry name" value="Cadherin 24"/>
    <property type="match status" value="1"/>
</dbReference>
<dbReference type="FunFam" id="2.60.40.60:FF:000017">
    <property type="entry name" value="Cadherin 24"/>
    <property type="match status" value="1"/>
</dbReference>
<dbReference type="FunFam" id="2.60.40.60:FF:000014">
    <property type="entry name" value="Cadherin 8"/>
    <property type="match status" value="1"/>
</dbReference>
<dbReference type="Gene3D" id="2.60.40.60">
    <property type="entry name" value="Cadherins"/>
    <property type="match status" value="5"/>
</dbReference>
<dbReference type="Gene3D" id="4.10.900.10">
    <property type="entry name" value="TCF3-CBD (Catenin binding domain)"/>
    <property type="match status" value="1"/>
</dbReference>
<dbReference type="InterPro" id="IPR039808">
    <property type="entry name" value="Cadherin"/>
</dbReference>
<dbReference type="InterPro" id="IPR002126">
    <property type="entry name" value="Cadherin-like_dom"/>
</dbReference>
<dbReference type="InterPro" id="IPR015919">
    <property type="entry name" value="Cadherin-like_sf"/>
</dbReference>
<dbReference type="InterPro" id="IPR020894">
    <property type="entry name" value="Cadherin_CS"/>
</dbReference>
<dbReference type="InterPro" id="IPR000233">
    <property type="entry name" value="Cadherin_Y-type_LIR"/>
</dbReference>
<dbReference type="InterPro" id="IPR027397">
    <property type="entry name" value="Catenin-bd_sf"/>
</dbReference>
<dbReference type="PANTHER" id="PTHR24027:SF84">
    <property type="entry name" value="CADHERIN-20"/>
    <property type="match status" value="1"/>
</dbReference>
<dbReference type="PANTHER" id="PTHR24027">
    <property type="entry name" value="CADHERIN-23"/>
    <property type="match status" value="1"/>
</dbReference>
<dbReference type="Pfam" id="PF01049">
    <property type="entry name" value="CADH_Y-type_LIR"/>
    <property type="match status" value="1"/>
</dbReference>
<dbReference type="Pfam" id="PF00028">
    <property type="entry name" value="Cadherin"/>
    <property type="match status" value="5"/>
</dbReference>
<dbReference type="PRINTS" id="PR00205">
    <property type="entry name" value="CADHERIN"/>
</dbReference>
<dbReference type="SMART" id="SM00112">
    <property type="entry name" value="CA"/>
    <property type="match status" value="5"/>
</dbReference>
<dbReference type="SUPFAM" id="SSF49313">
    <property type="entry name" value="Cadherin-like"/>
    <property type="match status" value="5"/>
</dbReference>
<dbReference type="PROSITE" id="PS00232">
    <property type="entry name" value="CADHERIN_1"/>
    <property type="match status" value="3"/>
</dbReference>
<dbReference type="PROSITE" id="PS50268">
    <property type="entry name" value="CADHERIN_2"/>
    <property type="match status" value="5"/>
</dbReference>
<sequence length="790" mass="88506">MSCKRSYHRHCALVYYMVLLDLTNAVFEFSHPLIRDSGNSQSRQLLHHRLKRSWVWNQFFVLEEYTGTEPLYVGKLHSDMDKGEGSITYILSGDGAGTMFTIDETTGDIHAIQRLDREERSQYTLKAQALDRRTTRPMEPESEFIVKIQDINDNEPKFLDGPYTASVPEMSPVGTSIIQVSATDADDPTYGSSARVVYSILQGQPYFSVDSKTGIIRTALTNMDRESRDYYEVIIQAKDMGGQLGGLAGTTTVNVTLSDVNDNPPRFPQKHYQMSVLESLLINSTVGRVLAMDLDEGVNAEMKYNIIDGDEFEVFDIVTDPSNQVGVITVKKPLDFETKKSYTLKIEGSNAHLEIRFLNLGPFRDTTSVHITVEDVDEPPVFGSSFYFVEVSENVDIGTTIQIVSAKDPDATNNSVRYSIDRSSDPGRYFYVDVTTGALMTARPLDREEVSWHNITILAMEMNNPAQIGGVPVTIKVLDVNDNAPTFTKFSETLMCENAKADQLIQTVSAVDQDDPQEGQHISYSLAPDAANNPNFTLRDNQDNTAWILTRRPGFKQSEQSTFYLPLLISDNGNPRLSSTGTLTIQVCSCDKDGDIMSCNAEPYTLPISLSRGALIAILTCIFVLLVLVLLILSMRRHRKQPYTIDEEDNVHENIVRYDDEGGGEEDTEAFDIAALWNPREAHMGKTRQDMKPEIESLSRYVTQTCRMDNNVHSYMLAKLYEADTDVCAPPFDSLQTYMFEGEGSVAHSLSSLQSLSTDSEQSYDYLSDWGPRFKKLAEMYGTKDNNGSL</sequence>
<protein>
    <recommendedName>
        <fullName>Cadherin-20</fullName>
    </recommendedName>
    <alternativeName>
        <fullName>F-cadherin</fullName>
    </alternativeName>
</protein>
<feature type="signal peptide" evidence="2">
    <location>
        <begin position="1"/>
        <end position="25"/>
    </location>
</feature>
<feature type="propeptide" id="PRO_0000340245" evidence="2">
    <location>
        <begin position="26"/>
        <end position="52"/>
    </location>
</feature>
<feature type="chain" id="PRO_0000340246" description="Cadherin-20">
    <location>
        <begin position="53"/>
        <end position="790"/>
    </location>
</feature>
<feature type="topological domain" description="Extracellular" evidence="2">
    <location>
        <begin position="26"/>
        <end position="612"/>
    </location>
</feature>
<feature type="transmembrane region" description="Helical" evidence="2">
    <location>
        <begin position="613"/>
        <end position="633"/>
    </location>
</feature>
<feature type="topological domain" description="Cytoplasmic" evidence="2">
    <location>
        <begin position="634"/>
        <end position="790"/>
    </location>
</feature>
<feature type="domain" description="Cadherin 1" evidence="3">
    <location>
        <begin position="54"/>
        <end position="158"/>
    </location>
</feature>
<feature type="domain" description="Cadherin 2" evidence="3">
    <location>
        <begin position="159"/>
        <end position="267"/>
    </location>
</feature>
<feature type="domain" description="Cadherin 3" evidence="3">
    <location>
        <begin position="268"/>
        <end position="382"/>
    </location>
</feature>
<feature type="domain" description="Cadherin 4" evidence="3">
    <location>
        <begin position="383"/>
        <end position="487"/>
    </location>
</feature>
<feature type="domain" description="Cadherin 5" evidence="3">
    <location>
        <begin position="487"/>
        <end position="605"/>
    </location>
</feature>
<feature type="glycosylation site" description="N-linked (GlcNAc...) asparagine" evidence="2">
    <location>
        <position position="254"/>
    </location>
</feature>
<feature type="glycosylation site" description="N-linked (GlcNAc...) asparagine" evidence="2">
    <location>
        <position position="283"/>
    </location>
</feature>
<feature type="glycosylation site" description="N-linked (GlcNAc...) asparagine" evidence="2">
    <location>
        <position position="413"/>
    </location>
</feature>
<feature type="glycosylation site" description="N-linked (GlcNAc...) asparagine" evidence="2">
    <location>
        <position position="454"/>
    </location>
</feature>
<feature type="glycosylation site" description="N-linked (GlcNAc...) asparagine" evidence="2">
    <location>
        <position position="535"/>
    </location>
</feature>
<name>CAD20_XENLA</name>
<keyword id="KW-0106">Calcium</keyword>
<keyword id="KW-0130">Cell adhesion</keyword>
<keyword id="KW-1003">Cell membrane</keyword>
<keyword id="KW-0165">Cleavage on pair of basic residues</keyword>
<keyword id="KW-0325">Glycoprotein</keyword>
<keyword id="KW-0472">Membrane</keyword>
<keyword id="KW-0479">Metal-binding</keyword>
<keyword id="KW-1185">Reference proteome</keyword>
<keyword id="KW-0677">Repeat</keyword>
<keyword id="KW-0732">Signal</keyword>
<keyword id="KW-0812">Transmembrane</keyword>
<keyword id="KW-1133">Transmembrane helix</keyword>
<reference key="1">
    <citation type="journal article" date="1995" name="Mol. Cell. Neurosci.">
        <title>Xenopus F-cadherin, a novel member of the cadherin family of cell adhesion molecules, is expressed at boundaries in the neural tube.</title>
        <authorList>
            <person name="Espeseth A."/>
            <person name="Johnson E."/>
            <person name="Kintner C."/>
        </authorList>
    </citation>
    <scope>NUCLEOTIDE SEQUENCE [MRNA]</scope>
    <scope>TISSUE SPECIFICITY</scope>
    <source>
        <tissue>Neurula</tissue>
    </source>
</reference>
<reference key="2">
    <citation type="journal article" date="1998" name="Development">
        <title>The role of F-cadherin in localizing cells during neural tube formation in Xenopus embryos.</title>
        <authorList>
            <person name="Espeseth A."/>
            <person name="Marnellos G."/>
            <person name="Kintner C."/>
        </authorList>
    </citation>
    <scope>FUNCTION</scope>
    <scope>TISSUE SPECIFICITY</scope>
</reference>
<gene>
    <name type="primary">cdh20</name>
</gene>
<comment type="function">
    <text evidence="5">Cadherins are calcium-dependent cell adhesion proteins. They preferentially interact with themselves in a homophilic manner in connecting cells; cadherins may thus contribute to the sorting of heterogeneous cell types.</text>
</comment>
<comment type="subcellular location">
    <subcellularLocation>
        <location evidence="1">Cell membrane</location>
        <topology evidence="1">Single-pass type I membrane protein</topology>
    </subcellularLocation>
</comment>
<comment type="tissue specificity">
    <text evidence="4 5">Detected in embryonic posterior neural plate, embryonic neural tube, sulcus limitans and embryonic kidney.</text>
</comment>
<comment type="domain">
    <text evidence="1">Three calcium ions are usually bound at the interface of each cadherin domain and rigidify the connections, imparting a strong curvature to the full-length ectodomain.</text>
</comment>
<organism>
    <name type="scientific">Xenopus laevis</name>
    <name type="common">African clawed frog</name>
    <dbReference type="NCBI Taxonomy" id="8355"/>
    <lineage>
        <taxon>Eukaryota</taxon>
        <taxon>Metazoa</taxon>
        <taxon>Chordata</taxon>
        <taxon>Craniata</taxon>
        <taxon>Vertebrata</taxon>
        <taxon>Euteleostomi</taxon>
        <taxon>Amphibia</taxon>
        <taxon>Batrachia</taxon>
        <taxon>Anura</taxon>
        <taxon>Pipoidea</taxon>
        <taxon>Pipidae</taxon>
        <taxon>Xenopodinae</taxon>
        <taxon>Xenopus</taxon>
        <taxon>Xenopus</taxon>
    </lineage>
</organism>